<name>TRUB_CAMJJ</name>
<organism>
    <name type="scientific">Campylobacter jejuni subsp. jejuni serotype O:23/36 (strain 81-176)</name>
    <dbReference type="NCBI Taxonomy" id="354242"/>
    <lineage>
        <taxon>Bacteria</taxon>
        <taxon>Pseudomonadati</taxon>
        <taxon>Campylobacterota</taxon>
        <taxon>Epsilonproteobacteria</taxon>
        <taxon>Campylobacterales</taxon>
        <taxon>Campylobacteraceae</taxon>
        <taxon>Campylobacter</taxon>
    </lineage>
</organism>
<sequence length="272" mass="31381">MNKIFAAFKPRGLSSNAFLSTLKKKYKNKKAGYSGTLDPFAKGVLIVAFGQYTKLFRFLKKTPKTYKATLWLGVYSLSLDDQNIKEIKNIKEFDLANLQQIIDQMQGIISYTPPQFSAKRINGTRAYELAKKGIEANLKPCQMEVFDCKILSYNHPFLNIEITVSEGAYIRSYCELFARKLGINATLSSLERIKEGKFVYNNEKSLNVLKYIDLKPNFIKELNKLENGAKIFVEELEFHDEGDYYIETEKYFSIINIKENTVKYLLNKVEKC</sequence>
<accession>A1W089</accession>
<reference key="1">
    <citation type="submission" date="2006-12" db="EMBL/GenBank/DDBJ databases">
        <authorList>
            <person name="Fouts D.E."/>
            <person name="Nelson K.E."/>
            <person name="Sebastian Y."/>
        </authorList>
    </citation>
    <scope>NUCLEOTIDE SEQUENCE [LARGE SCALE GENOMIC DNA]</scope>
    <source>
        <strain>81-176</strain>
    </source>
</reference>
<gene>
    <name evidence="1" type="primary">truB</name>
    <name type="ordered locus">CJJ81176_1120</name>
</gene>
<feature type="chain" id="PRO_1000084566" description="tRNA pseudouridine synthase B">
    <location>
        <begin position="1"/>
        <end position="272"/>
    </location>
</feature>
<feature type="active site" description="Nucleophile" evidence="1">
    <location>
        <position position="38"/>
    </location>
</feature>
<evidence type="ECO:0000255" key="1">
    <source>
        <dbReference type="HAMAP-Rule" id="MF_01080"/>
    </source>
</evidence>
<dbReference type="EC" id="5.4.99.25" evidence="1"/>
<dbReference type="EMBL" id="CP000538">
    <property type="protein sequence ID" value="EAQ72197.1"/>
    <property type="molecule type" value="Genomic_DNA"/>
</dbReference>
<dbReference type="RefSeq" id="WP_002856304.1">
    <property type="nucleotide sequence ID" value="NC_008787.1"/>
</dbReference>
<dbReference type="SMR" id="A1W089"/>
<dbReference type="KEGG" id="cjj:CJJ81176_1120"/>
<dbReference type="eggNOG" id="COG0130">
    <property type="taxonomic scope" value="Bacteria"/>
</dbReference>
<dbReference type="HOGENOM" id="CLU_032087_2_0_7"/>
<dbReference type="Proteomes" id="UP000000646">
    <property type="component" value="Chromosome"/>
</dbReference>
<dbReference type="GO" id="GO:0003723">
    <property type="term" value="F:RNA binding"/>
    <property type="evidence" value="ECO:0007669"/>
    <property type="project" value="InterPro"/>
</dbReference>
<dbReference type="GO" id="GO:0160148">
    <property type="term" value="F:tRNA pseudouridine(55) synthase activity"/>
    <property type="evidence" value="ECO:0007669"/>
    <property type="project" value="UniProtKB-EC"/>
</dbReference>
<dbReference type="GO" id="GO:1990481">
    <property type="term" value="P:mRNA pseudouridine synthesis"/>
    <property type="evidence" value="ECO:0007669"/>
    <property type="project" value="TreeGrafter"/>
</dbReference>
<dbReference type="GO" id="GO:0031119">
    <property type="term" value="P:tRNA pseudouridine synthesis"/>
    <property type="evidence" value="ECO:0007669"/>
    <property type="project" value="UniProtKB-UniRule"/>
</dbReference>
<dbReference type="Gene3D" id="3.30.2350.10">
    <property type="entry name" value="Pseudouridine synthase"/>
    <property type="match status" value="1"/>
</dbReference>
<dbReference type="HAMAP" id="MF_01080">
    <property type="entry name" value="TruB_bact"/>
    <property type="match status" value="1"/>
</dbReference>
<dbReference type="InterPro" id="IPR020103">
    <property type="entry name" value="PsdUridine_synth_cat_dom_sf"/>
</dbReference>
<dbReference type="InterPro" id="IPR002501">
    <property type="entry name" value="PsdUridine_synth_N"/>
</dbReference>
<dbReference type="InterPro" id="IPR014780">
    <property type="entry name" value="tRNA_psdUridine_synth_TruB"/>
</dbReference>
<dbReference type="NCBIfam" id="TIGR00431">
    <property type="entry name" value="TruB"/>
    <property type="match status" value="1"/>
</dbReference>
<dbReference type="PANTHER" id="PTHR13767:SF2">
    <property type="entry name" value="PSEUDOURIDYLATE SYNTHASE TRUB1"/>
    <property type="match status" value="1"/>
</dbReference>
<dbReference type="PANTHER" id="PTHR13767">
    <property type="entry name" value="TRNA-PSEUDOURIDINE SYNTHASE"/>
    <property type="match status" value="1"/>
</dbReference>
<dbReference type="Pfam" id="PF01509">
    <property type="entry name" value="TruB_N"/>
    <property type="match status" value="1"/>
</dbReference>
<dbReference type="SUPFAM" id="SSF55120">
    <property type="entry name" value="Pseudouridine synthase"/>
    <property type="match status" value="1"/>
</dbReference>
<proteinExistence type="inferred from homology"/>
<comment type="function">
    <text evidence="1">Responsible for synthesis of pseudouridine from uracil-55 in the psi GC loop of transfer RNAs.</text>
</comment>
<comment type="catalytic activity">
    <reaction evidence="1">
        <text>uridine(55) in tRNA = pseudouridine(55) in tRNA</text>
        <dbReference type="Rhea" id="RHEA:42532"/>
        <dbReference type="Rhea" id="RHEA-COMP:10101"/>
        <dbReference type="Rhea" id="RHEA-COMP:10102"/>
        <dbReference type="ChEBI" id="CHEBI:65314"/>
        <dbReference type="ChEBI" id="CHEBI:65315"/>
        <dbReference type="EC" id="5.4.99.25"/>
    </reaction>
</comment>
<comment type="similarity">
    <text evidence="1">Belongs to the pseudouridine synthase TruB family. Type 1 subfamily.</text>
</comment>
<keyword id="KW-0413">Isomerase</keyword>
<keyword id="KW-0819">tRNA processing</keyword>
<protein>
    <recommendedName>
        <fullName evidence="1">tRNA pseudouridine synthase B</fullName>
        <ecNumber evidence="1">5.4.99.25</ecNumber>
    </recommendedName>
    <alternativeName>
        <fullName evidence="1">tRNA pseudouridine(55) synthase</fullName>
        <shortName evidence="1">Psi55 synthase</shortName>
    </alternativeName>
    <alternativeName>
        <fullName evidence="1">tRNA pseudouridylate synthase</fullName>
    </alternativeName>
    <alternativeName>
        <fullName evidence="1">tRNA-uridine isomerase</fullName>
    </alternativeName>
</protein>